<organism evidence="10">
    <name type="scientific">Lysinibacillus sphaericus</name>
    <name type="common">Bacillus sphaericus</name>
    <dbReference type="NCBI Taxonomy" id="1421"/>
    <lineage>
        <taxon>Bacteria</taxon>
        <taxon>Bacillati</taxon>
        <taxon>Bacillota</taxon>
        <taxon>Bacilli</taxon>
        <taxon>Bacillales</taxon>
        <taxon>Bacillaceae</taxon>
        <taxon>Lysinibacillus</taxon>
    </lineage>
</organism>
<sequence length="546" mass="58736">MNKFKVNISGMTCTGCEKHVESALEKIGAKNIESSYRRGEAVFELPDDIEVESAIKAIDEANYQAGEIEEVSSLENVALINEDNYDLLIIGSGAAAFSSAIKAIEYGAKVGMIERGTVGGTCVNIGCVPSKTLLRAGEIIHLSKDNPFIGLQTSAGEVDLASLITQKDKLVSELRNQKYMDLIDEYNFDLIKGEAKFVDASTVEVNGAKLSAKRFLIATGASPSLPQISGLEKMDYLTSTTLLELKKIPKRLTVIGSGYIGMELGQLFHHLGSEITLMQRSERLLKEYDPEISESVEKALIEQGINLVKGATFERVEQSGEIKRVYVTVNGSREVIESDQLLVATGRKPNTDSLNLSAAGVETGKNNEILINDFGQTSNEKIYAAGDVTLGPQFVYVAAYEGGIITDNAIGGLNKKIDLSVVPAVTFTNPTVATVGLTEEQAKEKGYDVKTSVLPLDAVPRAIVNRETTGVFKLVADAETLKVLGVHIVSENAGDVIYAASLAVKFGLTVEDLTETLAPYLTMAEGLKLAALTFDKDIWKLSCCAG</sequence>
<keyword id="KW-0002">3D-structure</keyword>
<keyword id="KW-1015">Disulfide bond</keyword>
<keyword id="KW-0274">FAD</keyword>
<keyword id="KW-0285">Flavoprotein</keyword>
<keyword id="KW-0475">Mercuric resistance</keyword>
<keyword id="KW-0476">Mercury</keyword>
<keyword id="KW-0479">Metal-binding</keyword>
<keyword id="KW-0520">NAD</keyword>
<keyword id="KW-0521">NADP</keyword>
<keyword id="KW-0547">Nucleotide-binding</keyword>
<keyword id="KW-0560">Oxidoreductase</keyword>
<keyword id="KW-0676">Redox-active center</keyword>
<proteinExistence type="evidence at protein level"/>
<protein>
    <recommendedName>
        <fullName evidence="9">Mercuric reductase</fullName>
        <ecNumber evidence="2 7">1.16.1.1</ecNumber>
    </recommendedName>
    <alternativeName>
        <fullName evidence="2">Hg(II) reductase</fullName>
    </alternativeName>
</protein>
<comment type="function">
    <text evidence="2 7">Resistance to Hg(2+) in bacteria appears to be governed by a specialized system which includes mercuric reductase (By similarity) (PubMed:28894951). MerA protein is responsible for volatilizing mercury as Hg(0) (By similarity) (PubMed:28894951). Catalyzes reduction of Hg(2+) to elemental Hg, which is volatile and can diffuse out of cells passively (PubMed:28894951). Plays a pivotal role in mercury resistance and cell protection (PubMed:28894951).</text>
</comment>
<comment type="catalytic activity">
    <reaction evidence="2 6 7">
        <text>Hg + NADP(+) + H(+) = Hg(2+) + NADPH</text>
        <dbReference type="Rhea" id="RHEA:23856"/>
        <dbReference type="ChEBI" id="CHEBI:15378"/>
        <dbReference type="ChEBI" id="CHEBI:16170"/>
        <dbReference type="ChEBI" id="CHEBI:16793"/>
        <dbReference type="ChEBI" id="CHEBI:57783"/>
        <dbReference type="ChEBI" id="CHEBI:58349"/>
        <dbReference type="EC" id="1.16.1.1"/>
    </reaction>
</comment>
<comment type="cofactor">
    <cofactor evidence="2 3 6 7">
        <name>FAD</name>
        <dbReference type="ChEBI" id="CHEBI:57692"/>
    </cofactor>
    <text evidence="2 3 6">Binds 1 FAD per subunit.</text>
</comment>
<comment type="activity regulation">
    <text evidence="7">Uses NADPH as the preferred electron donor, but shows slight activity with NADH as well (PubMed:28894951). Inhibited by Cu(2+), Cd(2+), Zn(2+) and Co(2+), with Cu(2+) showing the strongest inhibition (PubMed:28894951). Enzyme activity is enhanced by b-mercaptoethanol and NaCl up to concentrations of 500 uM and 100 mM respectively, followed by inhibition at higher concentrations (PubMed:28894951).</text>
</comment>
<comment type="biophysicochemical properties">
    <kinetics>
        <KM evidence="7">231 uM for NADPH</KM>
        <Vmax evidence="7">18.0 umol/min/mg enzyme</Vmax>
    </kinetics>
    <phDependence>
        <text evidence="7">Optimum pH is 7-7.5.</text>
    </phDependence>
    <temperatureDependence>
        <text evidence="7">Optimum temperature is 25-50 degrees Celsius. Activity is inhibited only slightly at 60 degrees Celsius, but at temperatures of 70 degrees Celsius and above, the activity is reduced to about 14% of normal activity.</text>
    </temperatureDependence>
</comment>
<comment type="subunit">
    <text evidence="2 6 7">Homodimer.</text>
</comment>
<comment type="biotechnology">
    <text evidence="7">Presents to be a promising candidate for Hg(2+) bioremediation due to higher catalytic efficiency, temperature stability and salt tolerance as compared to MerA enzymes from other mesophiles.</text>
</comment>
<comment type="miscellaneous">
    <text evidence="1">The active site is a redox-active disulfide bond.</text>
</comment>
<comment type="similarity">
    <text evidence="9">Belongs to the class-I pyridine nucleotide-disulfide oxidoreductase family.</text>
</comment>
<gene>
    <name evidence="10" type="primary">merA</name>
</gene>
<feature type="chain" id="PRO_0000458986" description="Mercuric reductase">
    <location>
        <begin position="1"/>
        <end position="546"/>
    </location>
</feature>
<feature type="domain" description="HMA" evidence="5">
    <location>
        <begin position="2"/>
        <end position="66"/>
    </location>
</feature>
<feature type="binding site" evidence="5">
    <location>
        <position position="13"/>
    </location>
    <ligand>
        <name>a metal cation</name>
        <dbReference type="ChEBI" id="CHEBI:25213"/>
    </ligand>
</feature>
<feature type="binding site" evidence="5">
    <location>
        <position position="16"/>
    </location>
    <ligand>
        <name>a metal cation</name>
        <dbReference type="ChEBI" id="CHEBI:25213"/>
    </ligand>
</feature>
<feature type="binding site" evidence="1">
    <location>
        <position position="96"/>
    </location>
    <ligand>
        <name>FAD</name>
        <dbReference type="ChEBI" id="CHEBI:57692"/>
    </ligand>
</feature>
<feature type="binding site" evidence="1">
    <location>
        <position position="116"/>
    </location>
    <ligand>
        <name>FAD</name>
        <dbReference type="ChEBI" id="CHEBI:57692"/>
    </ligand>
</feature>
<feature type="binding site" evidence="1">
    <location>
        <position position="121"/>
    </location>
    <ligand>
        <name>FAD</name>
        <dbReference type="ChEBI" id="CHEBI:57692"/>
    </ligand>
</feature>
<feature type="binding site" evidence="3">
    <location>
        <position position="131"/>
    </location>
    <ligand>
        <name>FAD</name>
        <dbReference type="ChEBI" id="CHEBI:57692"/>
    </ligand>
</feature>
<feature type="binding site" evidence="1">
    <location>
        <position position="195"/>
    </location>
    <ligand>
        <name>FAD</name>
        <dbReference type="ChEBI" id="CHEBI:57692"/>
    </ligand>
</feature>
<feature type="binding site" evidence="3">
    <location>
        <begin position="256"/>
        <end position="263"/>
    </location>
    <ligand>
        <name>NAD(+)</name>
        <dbReference type="ChEBI" id="CHEBI:57540"/>
    </ligand>
</feature>
<feature type="binding site" evidence="3">
    <location>
        <position position="346"/>
    </location>
    <ligand>
        <name>NAD(+)</name>
        <dbReference type="ChEBI" id="CHEBI:57540"/>
    </ligand>
</feature>
<feature type="binding site" evidence="3">
    <location>
        <position position="387"/>
    </location>
    <ligand>
        <name>FAD</name>
        <dbReference type="ChEBI" id="CHEBI:57692"/>
    </ligand>
</feature>
<feature type="binding site" evidence="1">
    <location>
        <position position="395"/>
    </location>
    <ligand>
        <name>FAD</name>
        <dbReference type="ChEBI" id="CHEBI:57692"/>
    </ligand>
</feature>
<feature type="binding site" evidence="1">
    <location>
        <position position="543"/>
    </location>
    <ligand>
        <name>Hg(2+)</name>
        <dbReference type="ChEBI" id="CHEBI:16793"/>
    </ligand>
</feature>
<feature type="binding site" evidence="1">
    <location>
        <position position="544"/>
    </location>
    <ligand>
        <name>Hg(2+)</name>
        <dbReference type="ChEBI" id="CHEBI:16793"/>
    </ligand>
</feature>
<feature type="disulfide bond" description="Redox-active" evidence="4 7 11">
    <location>
        <begin position="122"/>
        <end position="127"/>
    </location>
</feature>
<feature type="strand" evidence="12">
    <location>
        <begin position="84"/>
        <end position="90"/>
    </location>
</feature>
<feature type="helix" evidence="12">
    <location>
        <begin position="94"/>
        <end position="105"/>
    </location>
</feature>
<feature type="strand" evidence="12">
    <location>
        <begin position="110"/>
        <end position="117"/>
    </location>
</feature>
<feature type="helix" evidence="12">
    <location>
        <begin position="121"/>
        <end position="124"/>
    </location>
</feature>
<feature type="helix" evidence="12">
    <location>
        <begin position="127"/>
        <end position="144"/>
    </location>
</feature>
<feature type="strand" evidence="12">
    <location>
        <begin position="153"/>
        <end position="155"/>
    </location>
</feature>
<feature type="helix" evidence="12">
    <location>
        <begin position="160"/>
        <end position="178"/>
    </location>
</feature>
<feature type="helix" evidence="12">
    <location>
        <begin position="180"/>
        <end position="184"/>
    </location>
</feature>
<feature type="turn" evidence="12">
    <location>
        <begin position="185"/>
        <end position="187"/>
    </location>
</feature>
<feature type="strand" evidence="12">
    <location>
        <begin position="189"/>
        <end position="193"/>
    </location>
</feature>
<feature type="strand" evidence="12">
    <location>
        <begin position="195"/>
        <end position="197"/>
    </location>
</feature>
<feature type="strand" evidence="12">
    <location>
        <begin position="199"/>
        <end position="205"/>
    </location>
</feature>
<feature type="strand" evidence="12">
    <location>
        <begin position="208"/>
        <end position="217"/>
    </location>
</feature>
<feature type="strand" evidence="12">
    <location>
        <begin position="221"/>
        <end position="223"/>
    </location>
</feature>
<feature type="strand" evidence="12">
    <location>
        <begin position="232"/>
        <end position="234"/>
    </location>
</feature>
<feature type="helix" evidence="12">
    <location>
        <begin position="239"/>
        <end position="242"/>
    </location>
</feature>
<feature type="strand" evidence="12">
    <location>
        <begin position="250"/>
        <end position="255"/>
    </location>
</feature>
<feature type="helix" evidence="12">
    <location>
        <begin position="259"/>
        <end position="270"/>
    </location>
</feature>
<feature type="strand" evidence="12">
    <location>
        <begin position="274"/>
        <end position="278"/>
    </location>
</feature>
<feature type="strand" evidence="12">
    <location>
        <begin position="280"/>
        <end position="285"/>
    </location>
</feature>
<feature type="helix" evidence="12">
    <location>
        <begin position="290"/>
        <end position="303"/>
    </location>
</feature>
<feature type="strand" evidence="12">
    <location>
        <begin position="306"/>
        <end position="308"/>
    </location>
</feature>
<feature type="strand" evidence="12">
    <location>
        <begin position="339"/>
        <end position="343"/>
    </location>
</feature>
<feature type="strand" evidence="12">
    <location>
        <begin position="347"/>
        <end position="350"/>
    </location>
</feature>
<feature type="turn" evidence="12">
    <location>
        <begin position="352"/>
        <end position="355"/>
    </location>
</feature>
<feature type="helix" evidence="12">
    <location>
        <begin position="356"/>
        <end position="358"/>
    </location>
</feature>
<feature type="strand" evidence="12">
    <location>
        <begin position="382"/>
        <end position="384"/>
    </location>
</feature>
<feature type="helix" evidence="12">
    <location>
        <begin position="395"/>
        <end position="409"/>
    </location>
</feature>
<feature type="strand" evidence="12">
    <location>
        <begin position="424"/>
        <end position="426"/>
    </location>
</feature>
<feature type="strand" evidence="12">
    <location>
        <begin position="428"/>
        <end position="436"/>
    </location>
</feature>
<feature type="helix" evidence="12">
    <location>
        <begin position="439"/>
        <end position="445"/>
    </location>
</feature>
<feature type="strand" evidence="12">
    <location>
        <begin position="449"/>
        <end position="455"/>
    </location>
</feature>
<feature type="helix" evidence="12">
    <location>
        <begin position="456"/>
        <end position="458"/>
    </location>
</feature>
<feature type="helix" evidence="12">
    <location>
        <begin position="460"/>
        <end position="464"/>
    </location>
</feature>
<feature type="strand" evidence="12">
    <location>
        <begin position="471"/>
        <end position="477"/>
    </location>
</feature>
<feature type="turn" evidence="12">
    <location>
        <begin position="478"/>
        <end position="480"/>
    </location>
</feature>
<feature type="strand" evidence="12">
    <location>
        <begin position="482"/>
        <end position="490"/>
    </location>
</feature>
<feature type="helix" evidence="12">
    <location>
        <begin position="493"/>
        <end position="495"/>
    </location>
</feature>
<feature type="helix" evidence="12">
    <location>
        <begin position="496"/>
        <end position="505"/>
    </location>
</feature>
<feature type="helix" evidence="12">
    <location>
        <begin position="510"/>
        <end position="515"/>
    </location>
</feature>
<feature type="helix" evidence="12">
    <location>
        <begin position="525"/>
        <end position="531"/>
    </location>
</feature>
<accession>D9J041</accession>
<reference evidence="10" key="1">
    <citation type="submission" date="2010-09" db="EMBL/GenBank/DDBJ databases">
        <title>Mercuric reductase gene of Lysinibacillus sphaericus G1.</title>
        <authorList>
            <person name="Bafana A."/>
            <person name="Devi S.S."/>
            <person name="Chakrabarti T."/>
            <person name="Krishnamurthi K."/>
        </authorList>
    </citation>
    <scope>NUCLEOTIDE SEQUENCE [GENOMIC DNA]</scope>
    <source>
        <strain evidence="10">G1</strain>
    </source>
</reference>
<reference evidence="11" key="2">
    <citation type="journal article" date="2017" name="BioMetals">
        <title>Structural and functional characterization of mercuric reductase from Lysinibacillus sphaericus strain G1.</title>
        <authorList>
            <person name="Bafana A."/>
            <person name="Khan F."/>
            <person name="Suguna K."/>
        </authorList>
    </citation>
    <scope>X-RAY CRYSTALLOGRAPHY (3.48 ANGSTROMS)</scope>
    <scope>FUNCTION</scope>
    <scope>CATALYTIC ACTIVITY</scope>
    <scope>COFACTOR</scope>
    <scope>ACTIVITY REGULATION</scope>
    <scope>BIOPHYSICOCHEMICAL PROPERTIES</scope>
    <scope>SUBUNIT</scope>
    <scope>BIOTECHNOLOGY</scope>
    <scope>DISULFIDE BOND</scope>
    <source>
        <strain evidence="8">G1</strain>
    </source>
</reference>
<name>MERA_LYSSH</name>
<evidence type="ECO:0000250" key="1">
    <source>
        <dbReference type="UniProtKB" id="P00392"/>
    </source>
</evidence>
<evidence type="ECO:0000255" key="2">
    <source>
        <dbReference type="PIRNR" id="PIRNR000350"/>
    </source>
</evidence>
<evidence type="ECO:0000255" key="3">
    <source>
        <dbReference type="PIRSR" id="PIRSR000350-3"/>
    </source>
</evidence>
<evidence type="ECO:0000255" key="4">
    <source>
        <dbReference type="PIRSR" id="PIRSR000350-4"/>
    </source>
</evidence>
<evidence type="ECO:0000255" key="5">
    <source>
        <dbReference type="PROSITE-ProRule" id="PRU00280"/>
    </source>
</evidence>
<evidence type="ECO:0000255" key="6">
    <source>
        <dbReference type="RuleBase" id="RU361223"/>
    </source>
</evidence>
<evidence type="ECO:0000269" key="7">
    <source>
    </source>
</evidence>
<evidence type="ECO:0000303" key="8">
    <source>
    </source>
</evidence>
<evidence type="ECO:0000305" key="9"/>
<evidence type="ECO:0000312" key="10">
    <source>
        <dbReference type="EMBL" id="ADJ37072.2"/>
    </source>
</evidence>
<evidence type="ECO:0007744" key="11">
    <source>
        <dbReference type="PDB" id="5X1Y"/>
    </source>
</evidence>
<evidence type="ECO:0007829" key="12">
    <source>
        <dbReference type="PDB" id="5X1Y"/>
    </source>
</evidence>
<dbReference type="EC" id="1.16.1.1" evidence="2 7"/>
<dbReference type="EMBL" id="HM235408">
    <property type="protein sequence ID" value="ADJ37072.2"/>
    <property type="molecule type" value="Genomic_DNA"/>
</dbReference>
<dbReference type="PDB" id="5X1Y">
    <property type="method" value="X-ray"/>
    <property type="resolution" value="3.48 A"/>
    <property type="chains" value="A/B/C/D/E/F=1-546"/>
</dbReference>
<dbReference type="PDBsum" id="5X1Y"/>
<dbReference type="SMR" id="D9J041"/>
<dbReference type="BRENDA" id="1.16.1.1">
    <property type="organism ID" value="698"/>
</dbReference>
<dbReference type="GO" id="GO:0050660">
    <property type="term" value="F:flavin adenine dinucleotide binding"/>
    <property type="evidence" value="ECO:0007669"/>
    <property type="project" value="InterPro"/>
</dbReference>
<dbReference type="GO" id="GO:0016152">
    <property type="term" value="F:mercury (II) reductase (NADP+) activity"/>
    <property type="evidence" value="ECO:0007669"/>
    <property type="project" value="UniProtKB-EC"/>
</dbReference>
<dbReference type="GO" id="GO:0045340">
    <property type="term" value="F:mercury ion binding"/>
    <property type="evidence" value="ECO:0007669"/>
    <property type="project" value="InterPro"/>
</dbReference>
<dbReference type="GO" id="GO:0003955">
    <property type="term" value="F:NAD(P)H dehydrogenase (quinone) activity"/>
    <property type="evidence" value="ECO:0007669"/>
    <property type="project" value="TreeGrafter"/>
</dbReference>
<dbReference type="GO" id="GO:0050661">
    <property type="term" value="F:NADP binding"/>
    <property type="evidence" value="ECO:0007669"/>
    <property type="project" value="InterPro"/>
</dbReference>
<dbReference type="GO" id="GO:0016668">
    <property type="term" value="F:oxidoreductase activity, acting on a sulfur group of donors, NAD(P) as acceptor"/>
    <property type="evidence" value="ECO:0007669"/>
    <property type="project" value="InterPro"/>
</dbReference>
<dbReference type="GO" id="GO:0050787">
    <property type="term" value="P:detoxification of mercury ion"/>
    <property type="evidence" value="ECO:0007669"/>
    <property type="project" value="InterPro"/>
</dbReference>
<dbReference type="CDD" id="cd00371">
    <property type="entry name" value="HMA"/>
    <property type="match status" value="1"/>
</dbReference>
<dbReference type="FunFam" id="3.30.390.30:FF:000001">
    <property type="entry name" value="Dihydrolipoyl dehydrogenase"/>
    <property type="match status" value="1"/>
</dbReference>
<dbReference type="Gene3D" id="3.30.390.30">
    <property type="match status" value="1"/>
</dbReference>
<dbReference type="Gene3D" id="3.30.70.100">
    <property type="match status" value="1"/>
</dbReference>
<dbReference type="Gene3D" id="3.50.50.60">
    <property type="entry name" value="FAD/NAD(P)-binding domain"/>
    <property type="match status" value="2"/>
</dbReference>
<dbReference type="InterPro" id="IPR036188">
    <property type="entry name" value="FAD/NAD-bd_sf"/>
</dbReference>
<dbReference type="InterPro" id="IPR023753">
    <property type="entry name" value="FAD/NAD-binding_dom"/>
</dbReference>
<dbReference type="InterPro" id="IPR016156">
    <property type="entry name" value="FAD/NAD-linked_Rdtase_dimer_sf"/>
</dbReference>
<dbReference type="InterPro" id="IPR006121">
    <property type="entry name" value="HMA_dom"/>
</dbReference>
<dbReference type="InterPro" id="IPR036163">
    <property type="entry name" value="HMA_dom_sf"/>
</dbReference>
<dbReference type="InterPro" id="IPR021179">
    <property type="entry name" value="Mercury_reductase_MerA"/>
</dbReference>
<dbReference type="InterPro" id="IPR001100">
    <property type="entry name" value="Pyr_nuc-diS_OxRdtase"/>
</dbReference>
<dbReference type="InterPro" id="IPR004099">
    <property type="entry name" value="Pyr_nucl-diS_OxRdtase_dimer"/>
</dbReference>
<dbReference type="InterPro" id="IPR012999">
    <property type="entry name" value="Pyr_OxRdtase_I_AS"/>
</dbReference>
<dbReference type="NCBIfam" id="TIGR02053">
    <property type="entry name" value="MerA"/>
    <property type="match status" value="1"/>
</dbReference>
<dbReference type="PANTHER" id="PTHR43014">
    <property type="entry name" value="MERCURIC REDUCTASE"/>
    <property type="match status" value="1"/>
</dbReference>
<dbReference type="PANTHER" id="PTHR43014:SF4">
    <property type="entry name" value="PYRIDINE NUCLEOTIDE-DISULFIDE OXIDOREDUCTASE RCLA-RELATED"/>
    <property type="match status" value="1"/>
</dbReference>
<dbReference type="Pfam" id="PF00403">
    <property type="entry name" value="HMA"/>
    <property type="match status" value="1"/>
</dbReference>
<dbReference type="Pfam" id="PF07992">
    <property type="entry name" value="Pyr_redox_2"/>
    <property type="match status" value="1"/>
</dbReference>
<dbReference type="Pfam" id="PF02852">
    <property type="entry name" value="Pyr_redox_dim"/>
    <property type="match status" value="1"/>
</dbReference>
<dbReference type="PIRSF" id="PIRSF000350">
    <property type="entry name" value="Mercury_reductase_MerA"/>
    <property type="match status" value="1"/>
</dbReference>
<dbReference type="PRINTS" id="PR00368">
    <property type="entry name" value="FADPNR"/>
</dbReference>
<dbReference type="PRINTS" id="PR00411">
    <property type="entry name" value="PNDRDTASEI"/>
</dbReference>
<dbReference type="SUPFAM" id="SSF51905">
    <property type="entry name" value="FAD/NAD(P)-binding domain"/>
    <property type="match status" value="1"/>
</dbReference>
<dbReference type="SUPFAM" id="SSF55424">
    <property type="entry name" value="FAD/NAD-linked reductases, dimerisation (C-terminal) domain"/>
    <property type="match status" value="1"/>
</dbReference>
<dbReference type="SUPFAM" id="SSF55008">
    <property type="entry name" value="HMA, heavy metal-associated domain"/>
    <property type="match status" value="1"/>
</dbReference>
<dbReference type="PROSITE" id="PS50846">
    <property type="entry name" value="HMA_2"/>
    <property type="match status" value="1"/>
</dbReference>
<dbReference type="PROSITE" id="PS00076">
    <property type="entry name" value="PYRIDINE_REDOX_1"/>
    <property type="match status" value="1"/>
</dbReference>